<comment type="function">
    <text evidence="1">Component of the Mediator complex, a coactivator involved in regulated gene transcription of nearly all RNA polymerase II-dependent genes. Mediator functions as a bridge to convey information from gene-specific regulatory proteins to the basal RNA polymerase II transcription machinery. Mediator is recruited to promoters by direct interactions with regulatory proteins and serves as a scaffold for the assembly of a functional preinitiation complex with RNA polymerase II and the general transcription factors. Binds to and activates cyclin-dependent kinase cdk-8 that phosphorylates the CTD (C-terminal domain) of the large subunit of RNA polymerase II (RNAp II), which may inhibit the formation of a transcription initiation complex (By similarity).</text>
</comment>
<comment type="subunit">
    <text evidence="1">Component of the Mediator complex.</text>
</comment>
<comment type="subcellular location">
    <subcellularLocation>
        <location evidence="1">Nucleus</location>
    </subcellularLocation>
</comment>
<comment type="similarity">
    <text evidence="3">Belongs to the cyclin family. Cyclin C subfamily.</text>
</comment>
<gene>
    <name type="primary">cic-1</name>
    <name type="ORF">H14E04.5</name>
</gene>
<protein>
    <recommendedName>
        <fullName>Cyclin-C</fullName>
    </recommendedName>
</protein>
<reference key="1">
    <citation type="journal article" date="1998" name="Science">
        <title>Genome sequence of the nematode C. elegans: a platform for investigating biology.</title>
        <authorList>
            <consortium name="The C. elegans sequencing consortium"/>
        </authorList>
    </citation>
    <scope>NUCLEOTIDE SEQUENCE [LARGE SCALE GENOMIC DNA]</scope>
    <source>
        <strain>Bristol N2</strain>
    </source>
</reference>
<organism>
    <name type="scientific">Caenorhabditis elegans</name>
    <dbReference type="NCBI Taxonomy" id="6239"/>
    <lineage>
        <taxon>Eukaryota</taxon>
        <taxon>Metazoa</taxon>
        <taxon>Ecdysozoa</taxon>
        <taxon>Nematoda</taxon>
        <taxon>Chromadorea</taxon>
        <taxon>Rhabditida</taxon>
        <taxon>Rhabditina</taxon>
        <taxon>Rhabditomorpha</taxon>
        <taxon>Rhabditoidea</taxon>
        <taxon>Rhabditidae</taxon>
        <taxon>Peloderinae</taxon>
        <taxon>Caenorhabditis</taxon>
    </lineage>
</organism>
<proteinExistence type="inferred from homology"/>
<keyword id="KW-0010">Activator</keyword>
<keyword id="KW-0195">Cyclin</keyword>
<keyword id="KW-0217">Developmental protein</keyword>
<keyword id="KW-0539">Nucleus</keyword>
<keyword id="KW-1185">Reference proteome</keyword>
<keyword id="KW-0804">Transcription</keyword>
<keyword id="KW-0805">Transcription regulation</keyword>
<dbReference type="EMBL" id="FO081521">
    <property type="protein sequence ID" value="CCD72187.1"/>
    <property type="molecule type" value="Genomic_DNA"/>
</dbReference>
<dbReference type="PIR" id="T33884">
    <property type="entry name" value="T33884"/>
</dbReference>
<dbReference type="RefSeq" id="NP_497548.2">
    <property type="nucleotide sequence ID" value="NM_065147.7"/>
</dbReference>
<dbReference type="SMR" id="Q9TYP2"/>
<dbReference type="FunCoup" id="Q9TYP2">
    <property type="interactions" value="3218"/>
</dbReference>
<dbReference type="STRING" id="6239.H14E04.5.1"/>
<dbReference type="PaxDb" id="6239-H14E04.5"/>
<dbReference type="PeptideAtlas" id="Q9TYP2"/>
<dbReference type="EnsemblMetazoa" id="H14E04.5.1">
    <property type="protein sequence ID" value="H14E04.5.1"/>
    <property type="gene ID" value="WBGene00000506"/>
</dbReference>
<dbReference type="GeneID" id="175357"/>
<dbReference type="KEGG" id="cel:CELE_H14E04.5"/>
<dbReference type="UCSC" id="H14E04.5">
    <property type="organism name" value="c. elegans"/>
</dbReference>
<dbReference type="AGR" id="WB:WBGene00000506"/>
<dbReference type="CTD" id="175357"/>
<dbReference type="WormBase" id="H14E04.5">
    <property type="protein sequence ID" value="CE34571"/>
    <property type="gene ID" value="WBGene00000506"/>
    <property type="gene designation" value="cic-1"/>
</dbReference>
<dbReference type="eggNOG" id="KOG0794">
    <property type="taxonomic scope" value="Eukaryota"/>
</dbReference>
<dbReference type="GeneTree" id="ENSGT00940000167379"/>
<dbReference type="HOGENOM" id="CLU_034754_1_1_1"/>
<dbReference type="InParanoid" id="Q9TYP2"/>
<dbReference type="OMA" id="CLLHPPH"/>
<dbReference type="OrthoDB" id="10266018at2759"/>
<dbReference type="PhylomeDB" id="Q9TYP2"/>
<dbReference type="Reactome" id="R-CEL-2173796">
    <property type="pathway name" value="SMAD2/SMAD3:SMAD4 heterotrimer regulates transcription"/>
</dbReference>
<dbReference type="PRO" id="PR:Q9TYP2"/>
<dbReference type="Proteomes" id="UP000001940">
    <property type="component" value="Chromosome III"/>
</dbReference>
<dbReference type="Bgee" id="WBGene00000506">
    <property type="expression patterns" value="Expressed in germ line (C elegans) and 4 other cell types or tissues"/>
</dbReference>
<dbReference type="GO" id="GO:0016592">
    <property type="term" value="C:mediator complex"/>
    <property type="evidence" value="ECO:0000318"/>
    <property type="project" value="GO_Central"/>
</dbReference>
<dbReference type="GO" id="GO:0005634">
    <property type="term" value="C:nucleus"/>
    <property type="evidence" value="ECO:0000318"/>
    <property type="project" value="GO_Central"/>
</dbReference>
<dbReference type="GO" id="GO:0016538">
    <property type="term" value="F:cyclin-dependent protein serine/threonine kinase regulator activity"/>
    <property type="evidence" value="ECO:0000318"/>
    <property type="project" value="GO_Central"/>
</dbReference>
<dbReference type="GO" id="GO:0045944">
    <property type="term" value="P:positive regulation of transcription by RNA polymerase II"/>
    <property type="evidence" value="ECO:0000318"/>
    <property type="project" value="GO_Central"/>
</dbReference>
<dbReference type="CDD" id="cd20513">
    <property type="entry name" value="CYCLIN_CCNC_rpt1"/>
    <property type="match status" value="1"/>
</dbReference>
<dbReference type="Gene3D" id="1.10.472.10">
    <property type="entry name" value="Cyclin-like"/>
    <property type="match status" value="2"/>
</dbReference>
<dbReference type="InterPro" id="IPR013763">
    <property type="entry name" value="Cyclin-like_dom"/>
</dbReference>
<dbReference type="InterPro" id="IPR036915">
    <property type="entry name" value="Cyclin-like_sf"/>
</dbReference>
<dbReference type="InterPro" id="IPR043198">
    <property type="entry name" value="Cyclin/Ssn8"/>
</dbReference>
<dbReference type="InterPro" id="IPR006671">
    <property type="entry name" value="Cyclin_N"/>
</dbReference>
<dbReference type="PANTHER" id="PTHR10026">
    <property type="entry name" value="CYCLIN"/>
    <property type="match status" value="1"/>
</dbReference>
<dbReference type="Pfam" id="PF00134">
    <property type="entry name" value="Cyclin_N"/>
    <property type="match status" value="1"/>
</dbReference>
<dbReference type="PIRSF" id="PIRSF028758">
    <property type="entry name" value="Cyclin, C/H/G types"/>
    <property type="match status" value="1"/>
</dbReference>
<dbReference type="SMART" id="SM00385">
    <property type="entry name" value="CYCLIN"/>
    <property type="match status" value="1"/>
</dbReference>
<dbReference type="SUPFAM" id="SSF47954">
    <property type="entry name" value="Cyclin-like"/>
    <property type="match status" value="2"/>
</dbReference>
<evidence type="ECO:0000250" key="1"/>
<evidence type="ECO:0000256" key="2">
    <source>
        <dbReference type="SAM" id="MobiDB-lite"/>
    </source>
</evidence>
<evidence type="ECO:0000305" key="3"/>
<feature type="chain" id="PRO_0000314264" description="Cyclin-C">
    <location>
        <begin position="1"/>
        <end position="302"/>
    </location>
</feature>
<feature type="domain" description="Cyclin N-terminal">
    <location>
        <begin position="46"/>
        <end position="152"/>
    </location>
</feature>
<feature type="region of interest" description="Disordered" evidence="2">
    <location>
        <begin position="281"/>
        <end position="302"/>
    </location>
</feature>
<feature type="compositionally biased region" description="Low complexity" evidence="2">
    <location>
        <begin position="292"/>
        <end position="302"/>
    </location>
</feature>
<sequence length="302" mass="35013">MALNFWKSSHCQQWIFDKTEIWKQRAEDMKIYNEEEYNRLNIFWANFITAVATEGAHSQANVGCKLRQQVIATAIIYFKRFYLRQSFRDMCPFLVASTALFLACKVEEHTTLSVSSFLKNTAIVLPKRWGVTFETTSTKNGVVYDSEFILVEILDCCLVVHHASRPMFELLEDLKQFTQQSTIANQPIKDLEAIEAQCQKVANDSLRCDVSLIFPPHVIGLSSIMVAMELMGRGEELEAWLVEVDTDFEKVTDCVEQIYKMYTLWKSFDEKEEVKKLMAKLPKPNQQPPPQQQHQHQQGYHL</sequence>
<accession>Q9TYP2</accession>
<name>CCNC_CAEEL</name>